<protein>
    <recommendedName>
        <fullName evidence="9">Auxin response factor 1</fullName>
    </recommendedName>
</protein>
<keyword id="KW-0002">3D-structure</keyword>
<keyword id="KW-0025">Alternative splicing</keyword>
<keyword id="KW-0927">Auxin signaling pathway</keyword>
<keyword id="KW-0963">Cytoplasm</keyword>
<keyword id="KW-0238">DNA-binding</keyword>
<keyword id="KW-0539">Nucleus</keyword>
<keyword id="KW-1185">Reference proteome</keyword>
<keyword id="KW-0678">Repressor</keyword>
<keyword id="KW-0804">Transcription</keyword>
<keyword id="KW-0805">Transcription regulation</keyword>
<sequence>MAASNHSSGKPGGVLSDALCRELWHACAGPLVTLPREGERVYYFPEGHMEQLEASMHQGLEQQMPSFNLPSKILCKVINIQRRAEPETDEVYAQITLLPELDQSEPTSPDAPVQEPEKCTVHSFCKTLTASDTSTHGGFSVLRRHADDCLPPLDMSQQPPWQELVATDLHNSEWHFRHIFRGQPRRHLLTTGWSVFVSSKKLVAGDAFIFLRGENEELRVGVRRHMRQQTNIPSSVISSHSMHIGVLATAAHAITTGTIFSVFYKPRTSRSEFIVSVNRYLEAKTQKLSVGMRFKMRFEGEEAPEKRFSGTIVGVQENKSSVWHDSEWRSLKVQWDEPSSVFRPERVSPWELEPLVANSTPSSQPQPPQRNKRPRPPGLPSPATGPSGPVTPDGVWKSPADTPSSVPLFSPPAKAATFGHGGNKSFGVSIGSAFWPTNADSAAESFASAFNNESTEKKQTNGNVCRLFGFELVENVNVDECFSAASVSGAVAVDQPVPSNEFDSGQQSEPLNINQSDIPSGSGDPEKSSLRSPQESQSRQIRSCTKVHMQGSAVGRAIDLTRSECYEDLFKKLEEMFDIKGELLESTKKWQVVYTDDEDDMMMVGDDPWNEFCGMVRKIFIYTPEEVKKLSPKNKLAVNARMQLKADAEENGNTEGRSSSMAGSR</sequence>
<dbReference type="EMBL" id="U83245">
    <property type="protein sequence ID" value="AAC49751.1"/>
    <property type="molecule type" value="mRNA"/>
</dbReference>
<dbReference type="EMBL" id="AC007258">
    <property type="protein sequence ID" value="AAD39318.1"/>
    <property type="molecule type" value="Genomic_DNA"/>
</dbReference>
<dbReference type="EMBL" id="CP002684">
    <property type="protein sequence ID" value="AEE33612.1"/>
    <property type="molecule type" value="Genomic_DNA"/>
</dbReference>
<dbReference type="EMBL" id="CP002684">
    <property type="protein sequence ID" value="AEE33613.1"/>
    <property type="molecule type" value="Genomic_DNA"/>
</dbReference>
<dbReference type="EMBL" id="CP002684">
    <property type="protein sequence ID" value="AEE33614.1"/>
    <property type="molecule type" value="Genomic_DNA"/>
</dbReference>
<dbReference type="EMBL" id="AY133723">
    <property type="protein sequence ID" value="AAM91657.1"/>
    <property type="molecule type" value="mRNA"/>
</dbReference>
<dbReference type="EMBL" id="BT002748">
    <property type="protein sequence ID" value="AAO22577.1"/>
    <property type="molecule type" value="mRNA"/>
</dbReference>
<dbReference type="PIR" id="D96621">
    <property type="entry name" value="D96621"/>
</dbReference>
<dbReference type="RefSeq" id="NP_001031208.1">
    <molecule id="Q8L7G0-1"/>
    <property type="nucleotide sequence ID" value="NM_001036131.3"/>
</dbReference>
<dbReference type="RefSeq" id="NP_176184.1">
    <molecule id="Q8L7G0-1"/>
    <property type="nucleotide sequence ID" value="NM_104668.4"/>
</dbReference>
<dbReference type="RefSeq" id="NP_849830.1">
    <molecule id="Q8L7G0-2"/>
    <property type="nucleotide sequence ID" value="NM_179499.2"/>
</dbReference>
<dbReference type="PDB" id="4LDV">
    <property type="method" value="X-ray"/>
    <property type="resolution" value="1.45 A"/>
    <property type="chains" value="A=1-355"/>
</dbReference>
<dbReference type="PDB" id="4LDW">
    <property type="method" value="X-ray"/>
    <property type="resolution" value="2.67 A"/>
    <property type="chains" value="A/B=1-355"/>
</dbReference>
<dbReference type="PDB" id="4LDX">
    <property type="method" value="X-ray"/>
    <property type="resolution" value="2.90 A"/>
    <property type="chains" value="A/B=1-355"/>
</dbReference>
<dbReference type="PDB" id="4LDY">
    <property type="method" value="X-ray"/>
    <property type="resolution" value="2.30 A"/>
    <property type="chains" value="A/B=1-355"/>
</dbReference>
<dbReference type="PDB" id="6YCQ">
    <property type="method" value="X-ray"/>
    <property type="resolution" value="1.65 A"/>
    <property type="chains" value="A/B=1-355"/>
</dbReference>
<dbReference type="PDBsum" id="4LDV"/>
<dbReference type="PDBsum" id="4LDW"/>
<dbReference type="PDBsum" id="4LDX"/>
<dbReference type="PDBsum" id="4LDY"/>
<dbReference type="PDBsum" id="6YCQ"/>
<dbReference type="SASBDB" id="Q8L7G0"/>
<dbReference type="SMR" id="Q8L7G0"/>
<dbReference type="BioGRID" id="27493">
    <property type="interactions" value="17"/>
</dbReference>
<dbReference type="FunCoup" id="Q8L7G0">
    <property type="interactions" value="2612"/>
</dbReference>
<dbReference type="IntAct" id="Q8L7G0">
    <property type="interactions" value="22"/>
</dbReference>
<dbReference type="MINT" id="Q8L7G0"/>
<dbReference type="STRING" id="3702.Q8L7G0"/>
<dbReference type="iPTMnet" id="Q8L7G0"/>
<dbReference type="PaxDb" id="3702-AT1G59750.1"/>
<dbReference type="ProteomicsDB" id="240612">
    <molecule id="Q8L7G0-1"/>
</dbReference>
<dbReference type="EnsemblPlants" id="AT1G59750.1">
    <molecule id="Q8L7G0-1"/>
    <property type="protein sequence ID" value="AT1G59750.1"/>
    <property type="gene ID" value="AT1G59750"/>
</dbReference>
<dbReference type="EnsemblPlants" id="AT1G59750.2">
    <molecule id="Q8L7G0-2"/>
    <property type="protein sequence ID" value="AT1G59750.2"/>
    <property type="gene ID" value="AT1G59750"/>
</dbReference>
<dbReference type="EnsemblPlants" id="AT1G59750.3">
    <molecule id="Q8L7G0-1"/>
    <property type="protein sequence ID" value="AT1G59750.3"/>
    <property type="gene ID" value="AT1G59750"/>
</dbReference>
<dbReference type="GeneID" id="842268"/>
<dbReference type="Gramene" id="AT1G59750.1">
    <molecule id="Q8L7G0-1"/>
    <property type="protein sequence ID" value="AT1G59750.1"/>
    <property type="gene ID" value="AT1G59750"/>
</dbReference>
<dbReference type="Gramene" id="AT1G59750.2">
    <molecule id="Q8L7G0-2"/>
    <property type="protein sequence ID" value="AT1G59750.2"/>
    <property type="gene ID" value="AT1G59750"/>
</dbReference>
<dbReference type="Gramene" id="AT1G59750.3">
    <molecule id="Q8L7G0-1"/>
    <property type="protein sequence ID" value="AT1G59750.3"/>
    <property type="gene ID" value="AT1G59750"/>
</dbReference>
<dbReference type="KEGG" id="ath:AT1G59750"/>
<dbReference type="Araport" id="AT1G59750"/>
<dbReference type="TAIR" id="AT1G59750">
    <property type="gene designation" value="ARF1"/>
</dbReference>
<dbReference type="eggNOG" id="ENOG502QQSN">
    <property type="taxonomic scope" value="Eukaryota"/>
</dbReference>
<dbReference type="InParanoid" id="Q8L7G0"/>
<dbReference type="OrthoDB" id="1050118at2759"/>
<dbReference type="PhylomeDB" id="Q8L7G0"/>
<dbReference type="EvolutionaryTrace" id="Q8L7G0"/>
<dbReference type="PRO" id="PR:Q8L7G0"/>
<dbReference type="Proteomes" id="UP000006548">
    <property type="component" value="Chromosome 1"/>
</dbReference>
<dbReference type="ExpressionAtlas" id="Q8L7G0">
    <property type="expression patterns" value="baseline and differential"/>
</dbReference>
<dbReference type="GO" id="GO:0005737">
    <property type="term" value="C:cytoplasm"/>
    <property type="evidence" value="ECO:0000314"/>
    <property type="project" value="UniProtKB"/>
</dbReference>
<dbReference type="GO" id="GO:0005634">
    <property type="term" value="C:nucleus"/>
    <property type="evidence" value="ECO:0000314"/>
    <property type="project" value="UniProtKB"/>
</dbReference>
<dbReference type="GO" id="GO:0003677">
    <property type="term" value="F:DNA binding"/>
    <property type="evidence" value="ECO:0000314"/>
    <property type="project" value="TAIR"/>
</dbReference>
<dbReference type="GO" id="GO:0003700">
    <property type="term" value="F:DNA-binding transcription factor activity"/>
    <property type="evidence" value="ECO:0000250"/>
    <property type="project" value="TAIR"/>
</dbReference>
<dbReference type="GO" id="GO:0042802">
    <property type="term" value="F:identical protein binding"/>
    <property type="evidence" value="ECO:0000353"/>
    <property type="project" value="IntAct"/>
</dbReference>
<dbReference type="GO" id="GO:0043565">
    <property type="term" value="F:sequence-specific DNA binding"/>
    <property type="evidence" value="ECO:0000314"/>
    <property type="project" value="TAIR"/>
</dbReference>
<dbReference type="GO" id="GO:0009734">
    <property type="term" value="P:auxin-activated signaling pathway"/>
    <property type="evidence" value="ECO:0007669"/>
    <property type="project" value="UniProtKB-KW"/>
</dbReference>
<dbReference type="GO" id="GO:0008219">
    <property type="term" value="P:cell death"/>
    <property type="evidence" value="ECO:0000315"/>
    <property type="project" value="UniProtKB"/>
</dbReference>
<dbReference type="GO" id="GO:0010150">
    <property type="term" value="P:leaf senescence"/>
    <property type="evidence" value="ECO:0000315"/>
    <property type="project" value="UniProtKB"/>
</dbReference>
<dbReference type="GO" id="GO:0045892">
    <property type="term" value="P:negative regulation of DNA-templated transcription"/>
    <property type="evidence" value="ECO:0000270"/>
    <property type="project" value="TAIR"/>
</dbReference>
<dbReference type="GO" id="GO:0009733">
    <property type="term" value="P:response to auxin"/>
    <property type="evidence" value="ECO:0000270"/>
    <property type="project" value="TAIR"/>
</dbReference>
<dbReference type="CDD" id="cd10017">
    <property type="entry name" value="B3_DNA"/>
    <property type="match status" value="1"/>
</dbReference>
<dbReference type="FunFam" id="2.30.30.1040:FF:000001">
    <property type="entry name" value="Auxin response factor"/>
    <property type="match status" value="1"/>
</dbReference>
<dbReference type="FunFam" id="2.40.330.10:FF:000001">
    <property type="entry name" value="Auxin response factor"/>
    <property type="match status" value="1"/>
</dbReference>
<dbReference type="FunFam" id="3.10.20.90:FF:000047">
    <property type="entry name" value="Auxin response factor"/>
    <property type="match status" value="1"/>
</dbReference>
<dbReference type="Gene3D" id="2.30.30.1040">
    <property type="match status" value="1"/>
</dbReference>
<dbReference type="Gene3D" id="2.40.330.10">
    <property type="entry name" value="DNA-binding pseudobarrel domain"/>
    <property type="match status" value="1"/>
</dbReference>
<dbReference type="Gene3D" id="3.10.20.90">
    <property type="entry name" value="Phosphatidylinositol 3-kinase Catalytic Subunit, Chain A, domain 1"/>
    <property type="match status" value="1"/>
</dbReference>
<dbReference type="InterPro" id="IPR010525">
    <property type="entry name" value="ARF_dom"/>
</dbReference>
<dbReference type="InterPro" id="IPR044835">
    <property type="entry name" value="ARF_plant"/>
</dbReference>
<dbReference type="InterPro" id="IPR033389">
    <property type="entry name" value="AUX/IAA_dom"/>
</dbReference>
<dbReference type="InterPro" id="IPR003340">
    <property type="entry name" value="B3_DNA-bd"/>
</dbReference>
<dbReference type="InterPro" id="IPR015300">
    <property type="entry name" value="DNA-bd_pseudobarrel_sf"/>
</dbReference>
<dbReference type="InterPro" id="IPR053793">
    <property type="entry name" value="PB1-like"/>
</dbReference>
<dbReference type="PANTHER" id="PTHR31384:SF96">
    <property type="entry name" value="AUXIN RESPONSE FACTOR 1"/>
    <property type="match status" value="1"/>
</dbReference>
<dbReference type="PANTHER" id="PTHR31384">
    <property type="entry name" value="AUXIN RESPONSE FACTOR 4-RELATED"/>
    <property type="match status" value="1"/>
</dbReference>
<dbReference type="Pfam" id="PF06507">
    <property type="entry name" value="ARF_AD"/>
    <property type="match status" value="1"/>
</dbReference>
<dbReference type="Pfam" id="PF02309">
    <property type="entry name" value="AUX_IAA"/>
    <property type="match status" value="2"/>
</dbReference>
<dbReference type="Pfam" id="PF02362">
    <property type="entry name" value="B3"/>
    <property type="match status" value="1"/>
</dbReference>
<dbReference type="SMART" id="SM01019">
    <property type="entry name" value="B3"/>
    <property type="match status" value="1"/>
</dbReference>
<dbReference type="SUPFAM" id="SSF54277">
    <property type="entry name" value="CAD &amp; PB1 domains"/>
    <property type="match status" value="1"/>
</dbReference>
<dbReference type="SUPFAM" id="SSF101936">
    <property type="entry name" value="DNA-binding pseudobarrel domain"/>
    <property type="match status" value="1"/>
</dbReference>
<dbReference type="PROSITE" id="PS50863">
    <property type="entry name" value="B3"/>
    <property type="match status" value="1"/>
</dbReference>
<dbReference type="PROSITE" id="PS51745">
    <property type="entry name" value="PB1"/>
    <property type="match status" value="1"/>
</dbReference>
<feature type="chain" id="PRO_0000111505" description="Auxin response factor 1">
    <location>
        <begin position="1"/>
        <end position="665"/>
    </location>
</feature>
<feature type="domain" description="PB1" evidence="2">
    <location>
        <begin position="542"/>
        <end position="635"/>
    </location>
</feature>
<feature type="DNA-binding region" description="TF-B3" evidence="1">
    <location>
        <begin position="124"/>
        <end position="226"/>
    </location>
</feature>
<feature type="region of interest" description="Disordered" evidence="3">
    <location>
        <begin position="356"/>
        <end position="408"/>
    </location>
</feature>
<feature type="region of interest" description="Disordered" evidence="3">
    <location>
        <begin position="496"/>
        <end position="542"/>
    </location>
</feature>
<feature type="region of interest" description="Disordered" evidence="3">
    <location>
        <begin position="645"/>
        <end position="665"/>
    </location>
</feature>
<feature type="compositionally biased region" description="Polar residues" evidence="3">
    <location>
        <begin position="497"/>
        <end position="519"/>
    </location>
</feature>
<feature type="compositionally biased region" description="Polar residues" evidence="3">
    <location>
        <begin position="530"/>
        <end position="542"/>
    </location>
</feature>
<feature type="compositionally biased region" description="Polar residues" evidence="3">
    <location>
        <begin position="651"/>
        <end position="665"/>
    </location>
</feature>
<feature type="splice variant" id="VSP_010077" description="In isoform 2." evidence="8">
    <location>
        <begin position="390"/>
        <end position="392"/>
    </location>
</feature>
<feature type="sequence conflict" description="In Ref. 4; AAM91657." evidence="10" ref="4">
    <original>H</original>
    <variation>Q</variation>
    <location>
        <position position="136"/>
    </location>
</feature>
<feature type="helix" evidence="13">
    <location>
        <begin position="17"/>
        <end position="28"/>
    </location>
</feature>
<feature type="strand" evidence="13">
    <location>
        <begin position="40"/>
        <end position="43"/>
    </location>
</feature>
<feature type="helix" evidence="13">
    <location>
        <begin position="45"/>
        <end position="52"/>
    </location>
</feature>
<feature type="strand" evidence="13">
    <location>
        <begin position="54"/>
        <end position="56"/>
    </location>
</feature>
<feature type="strand" evidence="13">
    <location>
        <begin position="71"/>
        <end position="84"/>
    </location>
</feature>
<feature type="turn" evidence="15">
    <location>
        <begin position="86"/>
        <end position="88"/>
    </location>
</feature>
<feature type="strand" evidence="13">
    <location>
        <begin position="91"/>
        <end position="99"/>
    </location>
</feature>
<feature type="strand" evidence="13">
    <location>
        <begin position="121"/>
        <end position="127"/>
    </location>
</feature>
<feature type="helix" evidence="13">
    <location>
        <begin position="130"/>
        <end position="133"/>
    </location>
</feature>
<feature type="strand" evidence="13">
    <location>
        <begin position="134"/>
        <end position="137"/>
    </location>
</feature>
<feature type="strand" evidence="13">
    <location>
        <begin position="139"/>
        <end position="141"/>
    </location>
</feature>
<feature type="helix" evidence="13">
    <location>
        <begin position="143"/>
        <end position="149"/>
    </location>
</feature>
<feature type="strand" evidence="13">
    <location>
        <begin position="157"/>
        <end position="159"/>
    </location>
</feature>
<feature type="strand" evidence="13">
    <location>
        <begin position="161"/>
        <end position="167"/>
    </location>
</feature>
<feature type="strand" evidence="13">
    <location>
        <begin position="173"/>
        <end position="181"/>
    </location>
</feature>
<feature type="turn" evidence="13">
    <location>
        <begin position="182"/>
        <end position="185"/>
    </location>
</feature>
<feature type="strand" evidence="13">
    <location>
        <begin position="186"/>
        <end position="189"/>
    </location>
</feature>
<feature type="helix" evidence="13">
    <location>
        <begin position="193"/>
        <end position="199"/>
    </location>
</feature>
<feature type="strand" evidence="13">
    <location>
        <begin position="207"/>
        <end position="213"/>
    </location>
</feature>
<feature type="turn" evidence="15">
    <location>
        <begin position="214"/>
        <end position="216"/>
    </location>
</feature>
<feature type="strand" evidence="13">
    <location>
        <begin position="218"/>
        <end position="221"/>
    </location>
</feature>
<feature type="helix" evidence="13">
    <location>
        <begin position="239"/>
        <end position="256"/>
    </location>
</feature>
<feature type="strand" evidence="13">
    <location>
        <begin position="260"/>
        <end position="264"/>
    </location>
</feature>
<feature type="turn" evidence="13">
    <location>
        <begin position="266"/>
        <end position="268"/>
    </location>
</feature>
<feature type="strand" evidence="13">
    <location>
        <begin position="274"/>
        <end position="276"/>
    </location>
</feature>
<feature type="helix" evidence="13">
    <location>
        <begin position="277"/>
        <end position="285"/>
    </location>
</feature>
<feature type="strand" evidence="13">
    <location>
        <begin position="293"/>
        <end position="297"/>
    </location>
</feature>
<feature type="strand" evidence="14">
    <location>
        <begin position="301"/>
        <end position="304"/>
    </location>
</feature>
<feature type="strand" evidence="13">
    <location>
        <begin position="307"/>
        <end position="316"/>
    </location>
</feature>
<feature type="strand" evidence="13">
    <location>
        <begin position="321"/>
        <end position="323"/>
    </location>
</feature>
<feature type="strand" evidence="13">
    <location>
        <begin position="331"/>
        <end position="337"/>
    </location>
</feature>
<feature type="strand" evidence="13">
    <location>
        <begin position="345"/>
        <end position="347"/>
    </location>
</feature>
<feature type="helix" evidence="13">
    <location>
        <begin position="349"/>
        <end position="351"/>
    </location>
</feature>
<organism>
    <name type="scientific">Arabidopsis thaliana</name>
    <name type="common">Mouse-ear cress</name>
    <dbReference type="NCBI Taxonomy" id="3702"/>
    <lineage>
        <taxon>Eukaryota</taxon>
        <taxon>Viridiplantae</taxon>
        <taxon>Streptophyta</taxon>
        <taxon>Embryophyta</taxon>
        <taxon>Tracheophyta</taxon>
        <taxon>Spermatophyta</taxon>
        <taxon>Magnoliopsida</taxon>
        <taxon>eudicotyledons</taxon>
        <taxon>Gunneridae</taxon>
        <taxon>Pentapetalae</taxon>
        <taxon>rosids</taxon>
        <taxon>malvids</taxon>
        <taxon>Brassicales</taxon>
        <taxon>Brassicaceae</taxon>
        <taxon>Camelineae</taxon>
        <taxon>Arabidopsis</taxon>
    </lineage>
</organism>
<gene>
    <name evidence="9" type="primary">ARF1</name>
    <name evidence="11" type="ordered locus">At1g59750</name>
    <name evidence="12" type="ORF">F23H11.7</name>
</gene>
<accession>Q8L7G0</accession>
<accession>O23664</accession>
<reference key="1">
    <citation type="journal article" date="1997" name="Science">
        <title>ARF1, a transcription factor that binds to auxin response elements.</title>
        <authorList>
            <person name="Ulmasov T."/>
            <person name="Hagen G."/>
            <person name="Guilfoyle T.J."/>
        </authorList>
    </citation>
    <scope>NUCLEOTIDE SEQUENCE [MRNA] (ISOFORM 1)</scope>
    <source>
        <strain>cv. Columbia</strain>
    </source>
</reference>
<reference key="2">
    <citation type="journal article" date="2000" name="Nature">
        <title>Sequence and analysis of chromosome 1 of the plant Arabidopsis thaliana.</title>
        <authorList>
            <person name="Theologis A."/>
            <person name="Ecker J.R."/>
            <person name="Palm C.J."/>
            <person name="Federspiel N.A."/>
            <person name="Kaul S."/>
            <person name="White O."/>
            <person name="Alonso J."/>
            <person name="Altafi H."/>
            <person name="Araujo R."/>
            <person name="Bowman C.L."/>
            <person name="Brooks S.Y."/>
            <person name="Buehler E."/>
            <person name="Chan A."/>
            <person name="Chao Q."/>
            <person name="Chen H."/>
            <person name="Cheuk R.F."/>
            <person name="Chin C.W."/>
            <person name="Chung M.K."/>
            <person name="Conn L."/>
            <person name="Conway A.B."/>
            <person name="Conway A.R."/>
            <person name="Creasy T.H."/>
            <person name="Dewar K."/>
            <person name="Dunn P."/>
            <person name="Etgu P."/>
            <person name="Feldblyum T.V."/>
            <person name="Feng J.-D."/>
            <person name="Fong B."/>
            <person name="Fujii C.Y."/>
            <person name="Gill J.E."/>
            <person name="Goldsmith A.D."/>
            <person name="Haas B."/>
            <person name="Hansen N.F."/>
            <person name="Hughes B."/>
            <person name="Huizar L."/>
            <person name="Hunter J.L."/>
            <person name="Jenkins J."/>
            <person name="Johnson-Hopson C."/>
            <person name="Khan S."/>
            <person name="Khaykin E."/>
            <person name="Kim C.J."/>
            <person name="Koo H.L."/>
            <person name="Kremenetskaia I."/>
            <person name="Kurtz D.B."/>
            <person name="Kwan A."/>
            <person name="Lam B."/>
            <person name="Langin-Hooper S."/>
            <person name="Lee A."/>
            <person name="Lee J.M."/>
            <person name="Lenz C.A."/>
            <person name="Li J.H."/>
            <person name="Li Y.-P."/>
            <person name="Lin X."/>
            <person name="Liu S.X."/>
            <person name="Liu Z.A."/>
            <person name="Luros J.S."/>
            <person name="Maiti R."/>
            <person name="Marziali A."/>
            <person name="Militscher J."/>
            <person name="Miranda M."/>
            <person name="Nguyen M."/>
            <person name="Nierman W.C."/>
            <person name="Osborne B.I."/>
            <person name="Pai G."/>
            <person name="Peterson J."/>
            <person name="Pham P.K."/>
            <person name="Rizzo M."/>
            <person name="Rooney T."/>
            <person name="Rowley D."/>
            <person name="Sakano H."/>
            <person name="Salzberg S.L."/>
            <person name="Schwartz J.R."/>
            <person name="Shinn P."/>
            <person name="Southwick A.M."/>
            <person name="Sun H."/>
            <person name="Tallon L.J."/>
            <person name="Tambunga G."/>
            <person name="Toriumi M.J."/>
            <person name="Town C.D."/>
            <person name="Utterback T."/>
            <person name="Van Aken S."/>
            <person name="Vaysberg M."/>
            <person name="Vysotskaia V.S."/>
            <person name="Walker M."/>
            <person name="Wu D."/>
            <person name="Yu G."/>
            <person name="Fraser C.M."/>
            <person name="Venter J.C."/>
            <person name="Davis R.W."/>
        </authorList>
    </citation>
    <scope>NUCLEOTIDE SEQUENCE [LARGE SCALE GENOMIC DNA]</scope>
    <source>
        <strain>cv. Columbia</strain>
    </source>
</reference>
<reference key="3">
    <citation type="journal article" date="2017" name="Plant J.">
        <title>Araport11: a complete reannotation of the Arabidopsis thaliana reference genome.</title>
        <authorList>
            <person name="Cheng C.Y."/>
            <person name="Krishnakumar V."/>
            <person name="Chan A.P."/>
            <person name="Thibaud-Nissen F."/>
            <person name="Schobel S."/>
            <person name="Town C.D."/>
        </authorList>
    </citation>
    <scope>GENOME REANNOTATION</scope>
    <source>
        <strain>cv. Columbia</strain>
    </source>
</reference>
<reference key="4">
    <citation type="journal article" date="2003" name="Science">
        <title>Empirical analysis of transcriptional activity in the Arabidopsis genome.</title>
        <authorList>
            <person name="Yamada K."/>
            <person name="Lim J."/>
            <person name="Dale J.M."/>
            <person name="Chen H."/>
            <person name="Shinn P."/>
            <person name="Palm C.J."/>
            <person name="Southwick A.M."/>
            <person name="Wu H.C."/>
            <person name="Kim C.J."/>
            <person name="Nguyen M."/>
            <person name="Pham P.K."/>
            <person name="Cheuk R.F."/>
            <person name="Karlin-Newmann G."/>
            <person name="Liu S.X."/>
            <person name="Lam B."/>
            <person name="Sakano H."/>
            <person name="Wu T."/>
            <person name="Yu G."/>
            <person name="Miranda M."/>
            <person name="Quach H.L."/>
            <person name="Tripp M."/>
            <person name="Chang C.H."/>
            <person name="Lee J.M."/>
            <person name="Toriumi M.J."/>
            <person name="Chan M.M."/>
            <person name="Tang C.C."/>
            <person name="Onodera C.S."/>
            <person name="Deng J.M."/>
            <person name="Akiyama K."/>
            <person name="Ansari Y."/>
            <person name="Arakawa T."/>
            <person name="Banh J."/>
            <person name="Banno F."/>
            <person name="Bowser L."/>
            <person name="Brooks S.Y."/>
            <person name="Carninci P."/>
            <person name="Chao Q."/>
            <person name="Choy N."/>
            <person name="Enju A."/>
            <person name="Goldsmith A.D."/>
            <person name="Gurjal M."/>
            <person name="Hansen N.F."/>
            <person name="Hayashizaki Y."/>
            <person name="Johnson-Hopson C."/>
            <person name="Hsuan V.W."/>
            <person name="Iida K."/>
            <person name="Karnes M."/>
            <person name="Khan S."/>
            <person name="Koesema E."/>
            <person name="Ishida J."/>
            <person name="Jiang P.X."/>
            <person name="Jones T."/>
            <person name="Kawai J."/>
            <person name="Kamiya A."/>
            <person name="Meyers C."/>
            <person name="Nakajima M."/>
            <person name="Narusaka M."/>
            <person name="Seki M."/>
            <person name="Sakurai T."/>
            <person name="Satou M."/>
            <person name="Tamse R."/>
            <person name="Vaysberg M."/>
            <person name="Wallender E.K."/>
            <person name="Wong C."/>
            <person name="Yamamura Y."/>
            <person name="Yuan S."/>
            <person name="Shinozaki K."/>
            <person name="Davis R.W."/>
            <person name="Theologis A."/>
            <person name="Ecker J.R."/>
        </authorList>
    </citation>
    <scope>NUCLEOTIDE SEQUENCE [LARGE SCALE MRNA] (ISOFORMS 1 AND 2)</scope>
    <source>
        <strain>cv. Columbia</strain>
    </source>
</reference>
<reference key="5">
    <citation type="journal article" date="1999" name="Plant J.">
        <title>Dimerization and DNA binding of auxin response factors.</title>
        <authorList>
            <person name="Ulmasov T."/>
            <person name="Hagen G."/>
            <person name="Guilfoyle T.J."/>
        </authorList>
    </citation>
    <scope>DIMERIZATION</scope>
    <scope>TISSUE SPECIFICITY</scope>
</reference>
<reference key="6">
    <citation type="journal article" date="1999" name="Proc. Natl. Acad. Sci. U.S.A.">
        <title>Activation and repression of transcription by auxin-response factors.</title>
        <authorList>
            <person name="Ulmasov T."/>
            <person name="Hagen G."/>
            <person name="Guilfoyle T.J."/>
        </authorList>
    </citation>
    <scope>TRANSCRIPTIONAL REPRESSOR</scope>
</reference>
<reference key="7">
    <citation type="journal article" date="2002" name="Plant Mol. Biol.">
        <title>Auxin-responsive gene expression: genes, promoters and regulatory factors.</title>
        <authorList>
            <person name="Hagen G."/>
            <person name="Guilfoyle T.J."/>
        </authorList>
    </citation>
    <scope>GENE FAMILY</scope>
    <scope>NOMENCLATURE</scope>
    <scope>FUNCTION</scope>
</reference>
<reference key="8">
    <citation type="journal article" date="2005" name="Development">
        <title>AUXIN RESPONSE FACTOR1 and AUXIN RESPONSE FACTOR2 regulate senescence and floral organ abscission in Arabidopsis thaliana.</title>
        <authorList>
            <person name="Ellis C.M."/>
            <person name="Nagpal P."/>
            <person name="Young J.C."/>
            <person name="Hagen G."/>
            <person name="Guilfoyle T.J."/>
            <person name="Reed J.W."/>
        </authorList>
    </citation>
    <scope>FUNCTION</scope>
    <scope>DEVELOPMENTAL STAGE</scope>
</reference>
<reference key="9">
    <citation type="journal article" date="2008" name="Trends Plant Sci.">
        <title>The plant B3 superfamily.</title>
        <authorList>
            <person name="Swaminathan K."/>
            <person name="Peterson K."/>
            <person name="Jack T."/>
        </authorList>
    </citation>
    <scope>GENE FAMILY</scope>
</reference>
<reference key="10">
    <citation type="journal article" date="2020" name="Biochem. Biophys. Res. Commun.">
        <title>The nuclear localized RIN13 induces cell death through interacting with ARF1.</title>
        <authorList>
            <person name="Liu X."/>
            <person name="Liu H."/>
            <person name="Liu W.-C."/>
            <person name="Gao Z."/>
        </authorList>
    </citation>
    <scope>FUNCTION</scope>
    <scope>INTERACTION WITH RIN13</scope>
    <scope>SUBCELLULAR LOCATION</scope>
</reference>
<proteinExistence type="evidence at protein level"/>
<evidence type="ECO:0000255" key="1">
    <source>
        <dbReference type="PROSITE-ProRule" id="PRU00326"/>
    </source>
</evidence>
<evidence type="ECO:0000255" key="2">
    <source>
        <dbReference type="PROSITE-ProRule" id="PRU01081"/>
    </source>
</evidence>
<evidence type="ECO:0000256" key="3">
    <source>
        <dbReference type="SAM" id="MobiDB-lite"/>
    </source>
</evidence>
<evidence type="ECO:0000269" key="4">
    <source>
    </source>
</evidence>
<evidence type="ECO:0000269" key="5">
    <source>
    </source>
</evidence>
<evidence type="ECO:0000269" key="6">
    <source>
    </source>
</evidence>
<evidence type="ECO:0000269" key="7">
    <source>
    </source>
</evidence>
<evidence type="ECO:0000303" key="8">
    <source>
    </source>
</evidence>
<evidence type="ECO:0000303" key="9">
    <source>
    </source>
</evidence>
<evidence type="ECO:0000305" key="10"/>
<evidence type="ECO:0000312" key="11">
    <source>
        <dbReference type="Araport" id="AT1G59750"/>
    </source>
</evidence>
<evidence type="ECO:0000312" key="12">
    <source>
        <dbReference type="EMBL" id="AAD39318.1"/>
    </source>
</evidence>
<evidence type="ECO:0007829" key="13">
    <source>
        <dbReference type="PDB" id="4LDV"/>
    </source>
</evidence>
<evidence type="ECO:0007829" key="14">
    <source>
        <dbReference type="PDB" id="4LDY"/>
    </source>
</evidence>
<evidence type="ECO:0007829" key="15">
    <source>
        <dbReference type="PDB" id="6YCQ"/>
    </source>
</evidence>
<comment type="function">
    <text evidence="5 6 7">Auxin response factors (ARFs) are transcriptional factors that bind specifically to the DNA sequence 5'-TGTCTC-3' found in the auxin-responsive promoter elements (AuxREs). Seems to act as transcriptional repressor. Formation of heterodimers with Aux/IAA proteins may alter their ability to modulate early auxin response genes expression. Promotes flowering, stamen development, floral organ abscission and fruit dehiscence. Acts as a repressor of IAA2, IAA3 and IAA7. Together with RIN13, promotes leaf senescence and cell death (PubMed:32446355).</text>
</comment>
<comment type="subunit">
    <text evidence="7">Homodimers and heterodimers. Interacts with the auxin-responsive proteins IAA12, IAA13, IAA17 and with ARF2. Binds to RIN13 in the nucleus (PubMed:32446355).</text>
</comment>
<comment type="interaction">
    <interactant intactId="EBI-2324259">
        <id>Q8L7G0</id>
    </interactant>
    <interactant intactId="EBI-2324259">
        <id>Q8L7G0</id>
        <label>ARF1</label>
    </interactant>
    <organismsDiffer>false</organismsDiffer>
    <experiments>4</experiments>
</comment>
<comment type="interaction">
    <interactant intactId="EBI-2324259">
        <id>Q8L7G0</id>
    </interactant>
    <interactant intactId="EBI-3946783">
        <id>Q9C5W9</id>
        <label>ARF18</label>
    </interactant>
    <organismsDiffer>false</organismsDiffer>
    <experiments>4</experiments>
</comment>
<comment type="interaction">
    <interactant intactId="EBI-2324259">
        <id>Q8L7G0</id>
    </interactant>
    <interactant intactId="EBI-1799262">
        <id>Q94JM3</id>
        <label>ARF2</label>
    </interactant>
    <organismsDiffer>false</organismsDiffer>
    <experiments>4</experiments>
</comment>
<comment type="interaction">
    <interactant intactId="EBI-2324259">
        <id>Q8L7G0</id>
    </interactant>
    <interactant intactId="EBI-3946762">
        <id>Q9XED8</id>
        <label>ARF9</label>
    </interactant>
    <organismsDiffer>false</organismsDiffer>
    <experiments>3</experiments>
</comment>
<comment type="interaction">
    <interactant intactId="EBI-2324259">
        <id>Q8L7G0</id>
    </interactant>
    <interactant intactId="EBI-3946459">
        <id>Q9C5X0</id>
        <label>IAA34</label>
    </interactant>
    <organismsDiffer>false</organismsDiffer>
    <experiments>4</experiments>
</comment>
<comment type="interaction">
    <interactant intactId="EBI-2324259">
        <id>Q8L7G0</id>
    </interactant>
    <interactant intactId="EBI-2324225">
        <id>Q9SN12</id>
        <label>MYB77</label>
    </interactant>
    <organismsDiffer>false</organismsDiffer>
    <experiments>2</experiments>
</comment>
<comment type="subcellular location">
    <subcellularLocation>
        <location evidence="7">Nucleus</location>
    </subcellularLocation>
    <subcellularLocation>
        <location evidence="7">Cytoplasm</location>
    </subcellularLocation>
    <text evidence="7">Translocates to the nucleus in the presence of RIN13.</text>
</comment>
<comment type="alternative products">
    <event type="alternative splicing"/>
    <isoform>
        <id>Q8L7G0-1</id>
        <name>1</name>
        <sequence type="displayed"/>
    </isoform>
    <isoform>
        <id>Q8L7G0-2</id>
        <name>2</name>
        <sequence type="described" ref="VSP_010077"/>
    </isoform>
</comment>
<comment type="tissue specificity">
    <text evidence="4">Expressed in the whole plant.</text>
</comment>
<comment type="developmental stage">
    <text evidence="6">Expressed in the sepals and carpels of young flower buds. At stage 10 of flower development, expression in the carpels becomes restricted to the style. Also expressed in anthers and filaments. At stage 13, expressed in the region at the top of the pedicel, including the abscission zone.</text>
</comment>
<comment type="domain">
    <text>Interactions between auxin response factors (ARFs) and Aux/IAA proteins occur through their C-terminal dimerization domains III and IV.</text>
</comment>
<comment type="miscellaneous">
    <molecule>Isoform 2</molecule>
    <text evidence="10">May be due to a competing acceptor splice site.</text>
</comment>
<comment type="similarity">
    <text evidence="10">Belongs to the ARF family.</text>
</comment>
<name>ARFA_ARATH</name>